<accession>Q92I67</accession>
<evidence type="ECO:0000250" key="1"/>
<evidence type="ECO:0000255" key="2"/>
<evidence type="ECO:0000305" key="3"/>
<sequence>MDITTTEIYHDGHHTPHGWRRWLFSTNHKDIGIMYIIFAVFAGIVGGLFSLLFRLELAMPGGTFLNHDFQLYNVLITAHAVIMVFFMIMPALFGGFGNYFVPLLIGAPDMAFPRLNNISFWLLVPAFLLLMGSAFVDGGPGTGWTLYPPLSNLSGHPGAAVDMAIFSLHLTGLSSILGSINLIVTIFNMRAPGMGLFKMPLFVWSILVTAFLIILAMPVLGGAITMLLTDRNFGTTFFKPDGGGDPVLFQHLFWFFGHPEVYIVILPGFGIVSQVISTFSRKPIFGYQGMIGAMVIIGFVGFIVWAHHMFTVGLSYNALIYFTAGTMIIAVPTGIKIFSWIATMWGGSITFPTPMLFSIGFIILFTIGGVTGIILSNSALDRVLHDTYYVVAHFHYTMSLGALFTAFAGFYYWFGKISGKQYPDILGKIHFWITFIGVNLTFFPQHFLGLAGMPRRIPDYPEAFAGWNMVSSIGAGISMFAALYFVFIVFYTLKYGKDCPNNPWGEGADTLEWTLTSPPPFHTFETPPHIEG</sequence>
<keyword id="KW-1003">Cell membrane</keyword>
<keyword id="KW-0186">Copper</keyword>
<keyword id="KW-0249">Electron transport</keyword>
<keyword id="KW-0349">Heme</keyword>
<keyword id="KW-0408">Iron</keyword>
<keyword id="KW-0472">Membrane</keyword>
<keyword id="KW-0479">Metal-binding</keyword>
<keyword id="KW-0679">Respiratory chain</keyword>
<keyword id="KW-1278">Translocase</keyword>
<keyword id="KW-0812">Transmembrane</keyword>
<keyword id="KW-1133">Transmembrane helix</keyword>
<keyword id="KW-0813">Transport</keyword>
<proteinExistence type="inferred from homology"/>
<organism>
    <name type="scientific">Rickettsia conorii (strain ATCC VR-613 / Malish 7)</name>
    <dbReference type="NCBI Taxonomy" id="272944"/>
    <lineage>
        <taxon>Bacteria</taxon>
        <taxon>Pseudomonadati</taxon>
        <taxon>Pseudomonadota</taxon>
        <taxon>Alphaproteobacteria</taxon>
        <taxon>Rickettsiales</taxon>
        <taxon>Rickettsiaceae</taxon>
        <taxon>Rickettsieae</taxon>
        <taxon>Rickettsia</taxon>
        <taxon>spotted fever group</taxon>
    </lineage>
</organism>
<comment type="function">
    <text evidence="1">Cytochrome c oxidase is the component of the respiratory chain that catalyzes the reduction of oxygen to water. Subunits 1-3 form the functional core of the enzyme complex. CO I is the catalytic subunit of the enzyme. Electrons originating in cytochrome c are transferred via the copper A center of subunit 2 and heme A of subunit 1 to the bimetallic center formed by heme A3 and copper B (By similarity).</text>
</comment>
<comment type="catalytic activity">
    <reaction>
        <text>4 Fe(II)-[cytochrome c] + O2 + 8 H(+)(in) = 4 Fe(III)-[cytochrome c] + 2 H2O + 4 H(+)(out)</text>
        <dbReference type="Rhea" id="RHEA:11436"/>
        <dbReference type="Rhea" id="RHEA-COMP:10350"/>
        <dbReference type="Rhea" id="RHEA-COMP:14399"/>
        <dbReference type="ChEBI" id="CHEBI:15377"/>
        <dbReference type="ChEBI" id="CHEBI:15378"/>
        <dbReference type="ChEBI" id="CHEBI:15379"/>
        <dbReference type="ChEBI" id="CHEBI:29033"/>
        <dbReference type="ChEBI" id="CHEBI:29034"/>
        <dbReference type="EC" id="7.1.1.9"/>
    </reaction>
</comment>
<comment type="pathway">
    <text>Energy metabolism; oxidative phosphorylation.</text>
</comment>
<comment type="subcellular location">
    <subcellularLocation>
        <location>Cell membrane</location>
        <topology>Multi-pass membrane protein</topology>
    </subcellularLocation>
</comment>
<comment type="similarity">
    <text evidence="3">Belongs to the heme-copper respiratory oxidase family.</text>
</comment>
<feature type="chain" id="PRO_0000183448" description="Probable cytochrome c oxidase subunit 1">
    <location>
        <begin position="1"/>
        <end position="532"/>
    </location>
</feature>
<feature type="transmembrane region" description="Helical" evidence="2">
    <location>
        <begin position="33"/>
        <end position="53"/>
    </location>
</feature>
<feature type="transmembrane region" description="Helical" evidence="2">
    <location>
        <begin position="74"/>
        <end position="94"/>
    </location>
</feature>
<feature type="transmembrane region" description="Helical" evidence="2">
    <location>
        <begin position="95"/>
        <end position="115"/>
    </location>
</feature>
<feature type="transmembrane region" description="Helical" evidence="2">
    <location>
        <begin position="118"/>
        <end position="138"/>
    </location>
</feature>
<feature type="transmembrane region" description="Helical" evidence="2">
    <location>
        <begin position="163"/>
        <end position="183"/>
    </location>
</feature>
<feature type="transmembrane region" description="Helical" evidence="2">
    <location>
        <begin position="200"/>
        <end position="220"/>
    </location>
</feature>
<feature type="transmembrane region" description="Helical" evidence="2">
    <location>
        <begin position="252"/>
        <end position="272"/>
    </location>
</feature>
<feature type="transmembrane region" description="Helical" evidence="2">
    <location>
        <begin position="284"/>
        <end position="304"/>
    </location>
</feature>
<feature type="transmembrane region" description="Helical" evidence="2">
    <location>
        <begin position="318"/>
        <end position="338"/>
    </location>
</feature>
<feature type="transmembrane region" description="Helical" evidence="2">
    <location>
        <begin position="355"/>
        <end position="375"/>
    </location>
</feature>
<feature type="transmembrane region" description="Helical" evidence="2">
    <location>
        <begin position="394"/>
        <end position="414"/>
    </location>
</feature>
<feature type="transmembrane region" description="Helical" evidence="2">
    <location>
        <begin position="431"/>
        <end position="451"/>
    </location>
</feature>
<feature type="transmembrane region" description="Helical" evidence="2">
    <location>
        <begin position="473"/>
        <end position="493"/>
    </location>
</feature>
<feature type="binding site" description="axial binding residue" evidence="1">
    <location>
        <position position="79"/>
    </location>
    <ligand>
        <name>Fe(II)-heme a</name>
        <dbReference type="ChEBI" id="CHEBI:61715"/>
    </ligand>
    <ligandPart>
        <name>Fe</name>
        <dbReference type="ChEBI" id="CHEBI:18248"/>
    </ligandPart>
</feature>
<feature type="binding site" evidence="1">
    <location>
        <position position="258"/>
    </location>
    <ligand>
        <name>Cu cation</name>
        <dbReference type="ChEBI" id="CHEBI:23378"/>
        <label>B</label>
    </ligand>
</feature>
<feature type="binding site" evidence="1">
    <location>
        <position position="262"/>
    </location>
    <ligand>
        <name>Cu cation</name>
        <dbReference type="ChEBI" id="CHEBI:23378"/>
        <label>B</label>
    </ligand>
</feature>
<feature type="binding site" evidence="1">
    <location>
        <position position="307"/>
    </location>
    <ligand>
        <name>Cu cation</name>
        <dbReference type="ChEBI" id="CHEBI:23378"/>
        <label>B</label>
    </ligand>
</feature>
<feature type="binding site" evidence="1">
    <location>
        <position position="308"/>
    </location>
    <ligand>
        <name>Cu cation</name>
        <dbReference type="ChEBI" id="CHEBI:23378"/>
        <label>B</label>
    </ligand>
</feature>
<feature type="binding site" description="axial binding residue" evidence="1">
    <location>
        <position position="393"/>
    </location>
    <ligand>
        <name>heme a3</name>
        <dbReference type="ChEBI" id="CHEBI:83282"/>
    </ligand>
    <ligandPart>
        <name>Fe</name>
        <dbReference type="ChEBI" id="CHEBI:18248"/>
    </ligandPart>
</feature>
<feature type="binding site" description="axial binding residue" evidence="1">
    <location>
        <position position="395"/>
    </location>
    <ligand>
        <name>Fe(II)-heme a</name>
        <dbReference type="ChEBI" id="CHEBI:61715"/>
    </ligand>
    <ligandPart>
        <name>Fe</name>
        <dbReference type="ChEBI" id="CHEBI:18248"/>
    </ligandPart>
</feature>
<name>COX1_RICCN</name>
<dbReference type="EC" id="7.1.1.9"/>
<dbReference type="EMBL" id="AE006914">
    <property type="protein sequence ID" value="AAL03091.1"/>
    <property type="molecule type" value="Genomic_DNA"/>
</dbReference>
<dbReference type="PIR" id="A97769">
    <property type="entry name" value="A97769"/>
</dbReference>
<dbReference type="RefSeq" id="WP_010977189.1">
    <property type="nucleotide sequence ID" value="NC_003103.1"/>
</dbReference>
<dbReference type="SMR" id="Q92I67"/>
<dbReference type="GeneID" id="928758"/>
<dbReference type="KEGG" id="rco:RC0553"/>
<dbReference type="HOGENOM" id="CLU_011899_7_3_5"/>
<dbReference type="UniPathway" id="UPA00705"/>
<dbReference type="Proteomes" id="UP000000816">
    <property type="component" value="Chromosome"/>
</dbReference>
<dbReference type="GO" id="GO:0005886">
    <property type="term" value="C:plasma membrane"/>
    <property type="evidence" value="ECO:0007669"/>
    <property type="project" value="UniProtKB-SubCell"/>
</dbReference>
<dbReference type="GO" id="GO:0045277">
    <property type="term" value="C:respiratory chain complex IV"/>
    <property type="evidence" value="ECO:0007669"/>
    <property type="project" value="InterPro"/>
</dbReference>
<dbReference type="GO" id="GO:0004129">
    <property type="term" value="F:cytochrome-c oxidase activity"/>
    <property type="evidence" value="ECO:0007669"/>
    <property type="project" value="UniProtKB-EC"/>
</dbReference>
<dbReference type="GO" id="GO:0020037">
    <property type="term" value="F:heme binding"/>
    <property type="evidence" value="ECO:0007669"/>
    <property type="project" value="InterPro"/>
</dbReference>
<dbReference type="GO" id="GO:0046872">
    <property type="term" value="F:metal ion binding"/>
    <property type="evidence" value="ECO:0007669"/>
    <property type="project" value="UniProtKB-KW"/>
</dbReference>
<dbReference type="GO" id="GO:0015990">
    <property type="term" value="P:electron transport coupled proton transport"/>
    <property type="evidence" value="ECO:0007669"/>
    <property type="project" value="InterPro"/>
</dbReference>
<dbReference type="GO" id="GO:0006119">
    <property type="term" value="P:oxidative phosphorylation"/>
    <property type="evidence" value="ECO:0007669"/>
    <property type="project" value="UniProtKB-UniPathway"/>
</dbReference>
<dbReference type="GO" id="GO:0022904">
    <property type="term" value="P:respiratory electron transport chain"/>
    <property type="evidence" value="ECO:0007669"/>
    <property type="project" value="TreeGrafter"/>
</dbReference>
<dbReference type="CDD" id="cd01663">
    <property type="entry name" value="Cyt_c_Oxidase_I"/>
    <property type="match status" value="1"/>
</dbReference>
<dbReference type="FunFam" id="1.20.210.10:FF:000004">
    <property type="entry name" value="Cytochrome c oxidase subunit 1"/>
    <property type="match status" value="1"/>
</dbReference>
<dbReference type="Gene3D" id="1.20.210.10">
    <property type="entry name" value="Cytochrome c oxidase-like, subunit I domain"/>
    <property type="match status" value="1"/>
</dbReference>
<dbReference type="InterPro" id="IPR023616">
    <property type="entry name" value="Cyt_c_oxase-like_su1_dom"/>
</dbReference>
<dbReference type="InterPro" id="IPR036927">
    <property type="entry name" value="Cyt_c_oxase-like_su1_sf"/>
</dbReference>
<dbReference type="InterPro" id="IPR000883">
    <property type="entry name" value="Cyt_C_Oxase_1"/>
</dbReference>
<dbReference type="InterPro" id="IPR023615">
    <property type="entry name" value="Cyt_c_Oxase_su1_BS"/>
</dbReference>
<dbReference type="InterPro" id="IPR033944">
    <property type="entry name" value="Cyt_c_oxase_su1_dom"/>
</dbReference>
<dbReference type="InterPro" id="IPR014241">
    <property type="entry name" value="Cyt_c_oxidase_su1_bac"/>
</dbReference>
<dbReference type="NCBIfam" id="TIGR02891">
    <property type="entry name" value="CtaD_CoxA"/>
    <property type="match status" value="1"/>
</dbReference>
<dbReference type="PANTHER" id="PTHR10422">
    <property type="entry name" value="CYTOCHROME C OXIDASE SUBUNIT 1"/>
    <property type="match status" value="1"/>
</dbReference>
<dbReference type="PANTHER" id="PTHR10422:SF18">
    <property type="entry name" value="CYTOCHROME C OXIDASE SUBUNIT 1"/>
    <property type="match status" value="1"/>
</dbReference>
<dbReference type="Pfam" id="PF00115">
    <property type="entry name" value="COX1"/>
    <property type="match status" value="1"/>
</dbReference>
<dbReference type="PRINTS" id="PR01165">
    <property type="entry name" value="CYCOXIDASEI"/>
</dbReference>
<dbReference type="SUPFAM" id="SSF81442">
    <property type="entry name" value="Cytochrome c oxidase subunit I-like"/>
    <property type="match status" value="1"/>
</dbReference>
<dbReference type="PROSITE" id="PS50855">
    <property type="entry name" value="COX1"/>
    <property type="match status" value="1"/>
</dbReference>
<dbReference type="PROSITE" id="PS00077">
    <property type="entry name" value="COX1_CUB"/>
    <property type="match status" value="1"/>
</dbReference>
<gene>
    <name type="primary">ctaD</name>
    <name type="synonym">coxA</name>
    <name type="ordered locus">RC0553</name>
</gene>
<reference key="1">
    <citation type="journal article" date="2001" name="Science">
        <title>Mechanisms of evolution in Rickettsia conorii and R. prowazekii.</title>
        <authorList>
            <person name="Ogata H."/>
            <person name="Audic S."/>
            <person name="Renesto-Audiffren P."/>
            <person name="Fournier P.-E."/>
            <person name="Barbe V."/>
            <person name="Samson D."/>
            <person name="Roux V."/>
            <person name="Cossart P."/>
            <person name="Weissenbach J."/>
            <person name="Claverie J.-M."/>
            <person name="Raoult D."/>
        </authorList>
    </citation>
    <scope>NUCLEOTIDE SEQUENCE [LARGE SCALE GENOMIC DNA]</scope>
    <source>
        <strain>ATCC VR-613 / Malish 7</strain>
    </source>
</reference>
<protein>
    <recommendedName>
        <fullName>Probable cytochrome c oxidase subunit 1</fullName>
        <ecNumber>7.1.1.9</ecNumber>
    </recommendedName>
    <alternativeName>
        <fullName>Cytochrome aa3 subunit 1</fullName>
    </alternativeName>
    <alternativeName>
        <fullName>Cytochrome c oxidase polypeptide I</fullName>
    </alternativeName>
</protein>